<name>NUSB_THEP1</name>
<sequence>MKTPRRRMRLAVFKALFQHEFRRDEDLEQILEEILDETYDKKAKEDARRYIRGIKENLPMIDNLISRYLEKWSLNRLSAVDRNVLRLATYELLFEKDIPIEATIDEAIEIAKRYGTENSGKFVNGILDRIAKEHAPKEKFEL</sequence>
<proteinExistence type="inferred from homology"/>
<dbReference type="EMBL" id="CP000702">
    <property type="protein sequence ID" value="ABQ47070.1"/>
    <property type="molecule type" value="Genomic_DNA"/>
</dbReference>
<dbReference type="RefSeq" id="WP_011943600.1">
    <property type="nucleotide sequence ID" value="NC_009486.1"/>
</dbReference>
<dbReference type="SMR" id="A5ILJ7"/>
<dbReference type="STRING" id="390874.Tpet_1053"/>
<dbReference type="KEGG" id="tpt:Tpet_1053"/>
<dbReference type="eggNOG" id="COG0781">
    <property type="taxonomic scope" value="Bacteria"/>
</dbReference>
<dbReference type="HOGENOM" id="CLU_087843_3_0_0"/>
<dbReference type="Proteomes" id="UP000006558">
    <property type="component" value="Chromosome"/>
</dbReference>
<dbReference type="GO" id="GO:0005829">
    <property type="term" value="C:cytosol"/>
    <property type="evidence" value="ECO:0007669"/>
    <property type="project" value="TreeGrafter"/>
</dbReference>
<dbReference type="GO" id="GO:0003723">
    <property type="term" value="F:RNA binding"/>
    <property type="evidence" value="ECO:0007669"/>
    <property type="project" value="UniProtKB-UniRule"/>
</dbReference>
<dbReference type="GO" id="GO:0006353">
    <property type="term" value="P:DNA-templated transcription termination"/>
    <property type="evidence" value="ECO:0007669"/>
    <property type="project" value="UniProtKB-UniRule"/>
</dbReference>
<dbReference type="GO" id="GO:0031564">
    <property type="term" value="P:transcription antitermination"/>
    <property type="evidence" value="ECO:0007669"/>
    <property type="project" value="UniProtKB-KW"/>
</dbReference>
<dbReference type="CDD" id="cd00619">
    <property type="entry name" value="Terminator_NusB"/>
    <property type="match status" value="1"/>
</dbReference>
<dbReference type="Gene3D" id="1.10.940.10">
    <property type="entry name" value="NusB-like"/>
    <property type="match status" value="1"/>
</dbReference>
<dbReference type="HAMAP" id="MF_00073">
    <property type="entry name" value="NusB"/>
    <property type="match status" value="1"/>
</dbReference>
<dbReference type="InterPro" id="IPR035926">
    <property type="entry name" value="NusB-like_sf"/>
</dbReference>
<dbReference type="InterPro" id="IPR011605">
    <property type="entry name" value="NusB_fam"/>
</dbReference>
<dbReference type="InterPro" id="IPR006027">
    <property type="entry name" value="NusB_RsmB_TIM44"/>
</dbReference>
<dbReference type="NCBIfam" id="TIGR01951">
    <property type="entry name" value="nusB"/>
    <property type="match status" value="1"/>
</dbReference>
<dbReference type="PANTHER" id="PTHR11078:SF3">
    <property type="entry name" value="ANTITERMINATION NUSB DOMAIN-CONTAINING PROTEIN"/>
    <property type="match status" value="1"/>
</dbReference>
<dbReference type="PANTHER" id="PTHR11078">
    <property type="entry name" value="N UTILIZATION SUBSTANCE PROTEIN B-RELATED"/>
    <property type="match status" value="1"/>
</dbReference>
<dbReference type="Pfam" id="PF01029">
    <property type="entry name" value="NusB"/>
    <property type="match status" value="1"/>
</dbReference>
<dbReference type="SUPFAM" id="SSF48013">
    <property type="entry name" value="NusB-like"/>
    <property type="match status" value="1"/>
</dbReference>
<evidence type="ECO:0000255" key="1">
    <source>
        <dbReference type="HAMAP-Rule" id="MF_00073"/>
    </source>
</evidence>
<accession>A5ILJ7</accession>
<organism>
    <name type="scientific">Thermotoga petrophila (strain ATCC BAA-488 / DSM 13995 / JCM 10881 / RKU-1)</name>
    <dbReference type="NCBI Taxonomy" id="390874"/>
    <lineage>
        <taxon>Bacteria</taxon>
        <taxon>Thermotogati</taxon>
        <taxon>Thermotogota</taxon>
        <taxon>Thermotogae</taxon>
        <taxon>Thermotogales</taxon>
        <taxon>Thermotogaceae</taxon>
        <taxon>Thermotoga</taxon>
    </lineage>
</organism>
<protein>
    <recommendedName>
        <fullName evidence="1">Transcription antitermination protein NusB</fullName>
    </recommendedName>
    <alternativeName>
        <fullName evidence="1">Antitermination factor NusB</fullName>
    </alternativeName>
</protein>
<gene>
    <name evidence="1" type="primary">nusB</name>
    <name type="ordered locus">Tpet_1053</name>
</gene>
<keyword id="KW-0694">RNA-binding</keyword>
<keyword id="KW-0804">Transcription</keyword>
<keyword id="KW-0889">Transcription antitermination</keyword>
<keyword id="KW-0805">Transcription regulation</keyword>
<feature type="chain" id="PRO_1000023785" description="Transcription antitermination protein NusB">
    <location>
        <begin position="1"/>
        <end position="142"/>
    </location>
</feature>
<reference key="1">
    <citation type="submission" date="2007-05" db="EMBL/GenBank/DDBJ databases">
        <title>Complete sequence of Thermotoga petrophila RKU-1.</title>
        <authorList>
            <consortium name="US DOE Joint Genome Institute"/>
            <person name="Copeland A."/>
            <person name="Lucas S."/>
            <person name="Lapidus A."/>
            <person name="Barry K."/>
            <person name="Glavina del Rio T."/>
            <person name="Dalin E."/>
            <person name="Tice H."/>
            <person name="Pitluck S."/>
            <person name="Sims D."/>
            <person name="Brettin T."/>
            <person name="Bruce D."/>
            <person name="Detter J.C."/>
            <person name="Han C."/>
            <person name="Tapia R."/>
            <person name="Schmutz J."/>
            <person name="Larimer F."/>
            <person name="Land M."/>
            <person name="Hauser L."/>
            <person name="Kyrpides N."/>
            <person name="Mikhailova N."/>
            <person name="Nelson K."/>
            <person name="Gogarten J.P."/>
            <person name="Noll K."/>
            <person name="Richardson P."/>
        </authorList>
    </citation>
    <scope>NUCLEOTIDE SEQUENCE [LARGE SCALE GENOMIC DNA]</scope>
    <source>
        <strain>ATCC BAA-488 / DSM 13995 / JCM 10881 / RKU-1</strain>
    </source>
</reference>
<comment type="function">
    <text evidence="1">Involved in transcription antitermination. Required for transcription of ribosomal RNA (rRNA) genes. Binds specifically to the boxA antiterminator sequence of the ribosomal RNA (rrn) operons.</text>
</comment>
<comment type="similarity">
    <text evidence="1">Belongs to the NusB family.</text>
</comment>